<feature type="chain" id="PRO_0000289231" description="tRNA (cytosine(34)-C(5))-methyltransferase, mitochondrial">
    <location>
        <begin position="1"/>
        <end position="348"/>
    </location>
</feature>
<feature type="active site" description="Nucleophile" evidence="2">
    <location>
        <position position="265"/>
    </location>
</feature>
<feature type="binding site" evidence="2">
    <location>
        <begin position="139"/>
        <end position="145"/>
    </location>
    <ligand>
        <name>S-adenosyl-L-methionine</name>
        <dbReference type="ChEBI" id="CHEBI:59789"/>
    </ligand>
</feature>
<feature type="binding site" evidence="2">
    <location>
        <position position="162"/>
    </location>
    <ligand>
        <name>S-adenosyl-L-methionine</name>
        <dbReference type="ChEBI" id="CHEBI:59789"/>
    </ligand>
</feature>
<feature type="binding site" evidence="2">
    <location>
        <position position="193"/>
    </location>
    <ligand>
        <name>S-adenosyl-L-methionine</name>
        <dbReference type="ChEBI" id="CHEBI:59789"/>
    </ligand>
</feature>
<feature type="binding site" evidence="2">
    <location>
        <position position="211"/>
    </location>
    <ligand>
        <name>S-adenosyl-L-methionine</name>
        <dbReference type="ChEBI" id="CHEBI:59789"/>
    </ligand>
</feature>
<feature type="splice variant" id="VSP_025970" description="In isoform 2." evidence="3">
    <location>
        <begin position="1"/>
        <end position="196"/>
    </location>
</feature>
<organism>
    <name type="scientific">Mus musculus</name>
    <name type="common">Mouse</name>
    <dbReference type="NCBI Taxonomy" id="10090"/>
    <lineage>
        <taxon>Eukaryota</taxon>
        <taxon>Metazoa</taxon>
        <taxon>Chordata</taxon>
        <taxon>Craniata</taxon>
        <taxon>Vertebrata</taxon>
        <taxon>Euteleostomi</taxon>
        <taxon>Mammalia</taxon>
        <taxon>Eutheria</taxon>
        <taxon>Euarchontoglires</taxon>
        <taxon>Glires</taxon>
        <taxon>Rodentia</taxon>
        <taxon>Myomorpha</taxon>
        <taxon>Muroidea</taxon>
        <taxon>Muridae</taxon>
        <taxon>Murinae</taxon>
        <taxon>Mus</taxon>
        <taxon>Mus</taxon>
    </lineage>
</organism>
<proteinExistence type="evidence at transcript level"/>
<gene>
    <name evidence="4" type="primary">Nsun3</name>
</gene>
<dbReference type="EC" id="2.1.1.-" evidence="1"/>
<dbReference type="EMBL" id="AK032127">
    <property type="protein sequence ID" value="BAC27717.1"/>
    <property type="molecule type" value="mRNA"/>
</dbReference>
<dbReference type="EMBL" id="AK153942">
    <property type="protein sequence ID" value="BAE32268.1"/>
    <property type="molecule type" value="mRNA"/>
</dbReference>
<dbReference type="EMBL" id="AK169841">
    <property type="protein sequence ID" value="BAE41405.1"/>
    <property type="molecule type" value="mRNA"/>
</dbReference>
<dbReference type="EMBL" id="BC125628">
    <property type="protein sequence ID" value="AAI25629.1"/>
    <property type="molecule type" value="mRNA"/>
</dbReference>
<dbReference type="EMBL" id="BC125630">
    <property type="protein sequence ID" value="AAI25631.1"/>
    <property type="molecule type" value="mRNA"/>
</dbReference>
<dbReference type="CCDS" id="CCDS37373.1">
    <molecule id="Q8CCT7-1"/>
</dbReference>
<dbReference type="RefSeq" id="NP_849256.1">
    <molecule id="Q8CCT7-1"/>
    <property type="nucleotide sequence ID" value="NM_178925.4"/>
</dbReference>
<dbReference type="SMR" id="Q8CCT7"/>
<dbReference type="FunCoup" id="Q8CCT7">
    <property type="interactions" value="1449"/>
</dbReference>
<dbReference type="STRING" id="10090.ENSMUSP00000059720"/>
<dbReference type="PhosphoSitePlus" id="Q8CCT7"/>
<dbReference type="PaxDb" id="10090-ENSMUSP00000059720"/>
<dbReference type="ProteomicsDB" id="252858">
    <molecule id="Q8CCT7-1"/>
</dbReference>
<dbReference type="ProteomicsDB" id="252859">
    <molecule id="Q8CCT7-2"/>
</dbReference>
<dbReference type="Antibodypedia" id="32087">
    <property type="antibodies" value="117 antibodies from 21 providers"/>
</dbReference>
<dbReference type="DNASU" id="106338"/>
<dbReference type="Ensembl" id="ENSMUST00000063089.12">
    <molecule id="Q8CCT7-1"/>
    <property type="protein sequence ID" value="ENSMUSP00000059720.6"/>
    <property type="gene ID" value="ENSMUSG00000050312.13"/>
</dbReference>
<dbReference type="GeneID" id="106338"/>
<dbReference type="KEGG" id="mmu:106338"/>
<dbReference type="UCSC" id="uc007zps.1">
    <molecule id="Q8CCT7-1"/>
    <property type="organism name" value="mouse"/>
</dbReference>
<dbReference type="UCSC" id="uc007zpt.2">
    <molecule id="Q8CCT7-2"/>
    <property type="organism name" value="mouse"/>
</dbReference>
<dbReference type="AGR" id="MGI:2146565"/>
<dbReference type="CTD" id="63899"/>
<dbReference type="MGI" id="MGI:2146565">
    <property type="gene designation" value="Nsun3"/>
</dbReference>
<dbReference type="VEuPathDB" id="HostDB:ENSMUSG00000050312"/>
<dbReference type="eggNOG" id="KOG2198">
    <property type="taxonomic scope" value="Eukaryota"/>
</dbReference>
<dbReference type="GeneTree" id="ENSGT00940000153665"/>
<dbReference type="HOGENOM" id="CLU_041061_1_0_1"/>
<dbReference type="InParanoid" id="Q8CCT7"/>
<dbReference type="OMA" id="YFHCNEY"/>
<dbReference type="OrthoDB" id="8020218at2759"/>
<dbReference type="PhylomeDB" id="Q8CCT7"/>
<dbReference type="TreeFam" id="TF321304"/>
<dbReference type="BioGRID-ORCS" id="106338">
    <property type="hits" value="5 hits in 77 CRISPR screens"/>
</dbReference>
<dbReference type="ChiTaRS" id="Nsun3">
    <property type="organism name" value="mouse"/>
</dbReference>
<dbReference type="PRO" id="PR:Q8CCT7"/>
<dbReference type="Proteomes" id="UP000000589">
    <property type="component" value="Chromosome 16"/>
</dbReference>
<dbReference type="RNAct" id="Q8CCT7">
    <property type="molecule type" value="protein"/>
</dbReference>
<dbReference type="Bgee" id="ENSMUSG00000050312">
    <property type="expression patterns" value="Expressed in animal zygote and 236 other cell types or tissues"/>
</dbReference>
<dbReference type="ExpressionAtlas" id="Q8CCT7">
    <property type="expression patterns" value="baseline and differential"/>
</dbReference>
<dbReference type="GO" id="GO:0005759">
    <property type="term" value="C:mitochondrial matrix"/>
    <property type="evidence" value="ECO:0000250"/>
    <property type="project" value="UniProtKB"/>
</dbReference>
<dbReference type="GO" id="GO:0005739">
    <property type="term" value="C:mitochondrion"/>
    <property type="evidence" value="ECO:0000250"/>
    <property type="project" value="UniProtKB"/>
</dbReference>
<dbReference type="GO" id="GO:0016428">
    <property type="term" value="F:tRNA (cytidine-5-)-methyltransferase activity"/>
    <property type="evidence" value="ECO:0000250"/>
    <property type="project" value="UniProtKB"/>
</dbReference>
<dbReference type="GO" id="GO:0000049">
    <property type="term" value="F:tRNA binding"/>
    <property type="evidence" value="ECO:0007669"/>
    <property type="project" value="UniProtKB-KW"/>
</dbReference>
<dbReference type="GO" id="GO:0070129">
    <property type="term" value="P:regulation of mitochondrial translation"/>
    <property type="evidence" value="ECO:0000250"/>
    <property type="project" value="UniProtKB"/>
</dbReference>
<dbReference type="GO" id="GO:0002127">
    <property type="term" value="P:tRNA wobble base cytosine methylation"/>
    <property type="evidence" value="ECO:0000250"/>
    <property type="project" value="UniProtKB"/>
</dbReference>
<dbReference type="CDD" id="cd02440">
    <property type="entry name" value="AdoMet_MTases"/>
    <property type="match status" value="1"/>
</dbReference>
<dbReference type="FunFam" id="3.40.50.150:FF:000055">
    <property type="entry name" value="5-methylcytosine rRNA methyltransferase NSUN4"/>
    <property type="match status" value="1"/>
</dbReference>
<dbReference type="Gene3D" id="6.20.240.40">
    <property type="match status" value="1"/>
</dbReference>
<dbReference type="Gene3D" id="3.40.50.150">
    <property type="entry name" value="Vaccinia Virus protein VP39"/>
    <property type="match status" value="1"/>
</dbReference>
<dbReference type="InterPro" id="IPR049560">
    <property type="entry name" value="MeTrfase_RsmB-F_NOP2_cat"/>
</dbReference>
<dbReference type="InterPro" id="IPR001678">
    <property type="entry name" value="MeTrfase_RsmB-F_NOP2_dom"/>
</dbReference>
<dbReference type="InterPro" id="IPR023267">
    <property type="entry name" value="RCMT"/>
</dbReference>
<dbReference type="InterPro" id="IPR029063">
    <property type="entry name" value="SAM-dependent_MTases_sf"/>
</dbReference>
<dbReference type="PANTHER" id="PTHR22808">
    <property type="entry name" value="NCL1 YEAST -RELATED NOL1/NOP2/FMU SUN DOMAIN-CONTAINING"/>
    <property type="match status" value="1"/>
</dbReference>
<dbReference type="PANTHER" id="PTHR22808:SF8">
    <property type="entry name" value="TRNA (CYTOSINE(34)-C(5))-METHYLTRANSFERASE, MITOCHONDRIAL"/>
    <property type="match status" value="1"/>
</dbReference>
<dbReference type="Pfam" id="PF01189">
    <property type="entry name" value="Methyltr_RsmB-F"/>
    <property type="match status" value="1"/>
</dbReference>
<dbReference type="PRINTS" id="PR02008">
    <property type="entry name" value="RCMTFAMILY"/>
</dbReference>
<dbReference type="SUPFAM" id="SSF53335">
    <property type="entry name" value="S-adenosyl-L-methionine-dependent methyltransferases"/>
    <property type="match status" value="1"/>
</dbReference>
<dbReference type="PROSITE" id="PS51686">
    <property type="entry name" value="SAM_MT_RSMB_NOP"/>
    <property type="match status" value="1"/>
</dbReference>
<comment type="function">
    <text evidence="1">Mitochondrial tRNA methyltransferase that mediates methylation of cytosine to 5-methylcytosine (m5C) at position 34 of mt-tRNA(Met). mt-tRNA(Met) methylation at cytosine(34) takes place at the wobble position of the anticodon and initiates the formation of 5-formylcytosine (f(5)c) at this position. mt-tRNA(Met) containing the f(5)c modification at the wobble position enables recognition of the AUA codon in addition to the AUG codon, expanding codon recognition in mitochondrial translation.</text>
</comment>
<comment type="catalytic activity">
    <reaction evidence="1">
        <text>cytidine(34) in mitochondrial tRNA + S-adenosyl-L-methionine = 5-methylcytidine(34) in mitochondrial tRNA + S-adenosyl-L-homocysteine + H(+)</text>
        <dbReference type="Rhea" id="RHEA:53076"/>
        <dbReference type="Rhea" id="RHEA-COMP:13451"/>
        <dbReference type="Rhea" id="RHEA-COMP:13453"/>
        <dbReference type="ChEBI" id="CHEBI:15378"/>
        <dbReference type="ChEBI" id="CHEBI:57856"/>
        <dbReference type="ChEBI" id="CHEBI:59789"/>
        <dbReference type="ChEBI" id="CHEBI:74483"/>
        <dbReference type="ChEBI" id="CHEBI:82748"/>
    </reaction>
    <physiologicalReaction direction="left-to-right" evidence="1">
        <dbReference type="Rhea" id="RHEA:53077"/>
    </physiologicalReaction>
</comment>
<comment type="subcellular location">
    <subcellularLocation>
        <location evidence="1">Mitochondrion matrix</location>
    </subcellularLocation>
</comment>
<comment type="alternative products">
    <event type="alternative splicing"/>
    <isoform>
        <id>Q8CCT7-1</id>
        <name>1</name>
        <sequence type="displayed"/>
    </isoform>
    <isoform>
        <id>Q8CCT7-2</id>
        <name>2</name>
        <sequence type="described" ref="VSP_025970"/>
    </isoform>
</comment>
<comment type="similarity">
    <text evidence="2">Belongs to the class I-like SAM-binding methyltransferase superfamily. RsmB/NOP family.</text>
</comment>
<accession>Q8CCT7</accession>
<accession>Q3TE43</accession>
<sequence length="348" mass="39182">MLTRLKAKSEGKLAKQLCRVVLDQFDKQYSKELGDSWSTVRDVLISPSLWQYAILFNRFNYPFELEKALHLRGYHTVLQGALPHYPKSMKCYLSRTPDRMPSERHQTGSLKKYYLLNAASLLPVLALELRDGEAVLDLCAAPGGKSVALLQCAYPGYLLCNEYDRPRGRWLRQTLESFIPQPLINVIKVSELDGREMGDAQPATFDKVLVDAPCSNDRSWLFSSDSQKAAYRIHQRKNLPVLQVELVRSAIKALRPGGLLVYSTCTLSKAENQDVISEVLTSDSNIVPVDISGIARTFSQDFTFAPTDQKCSLLVIPEKGKAWGPMYIAKLKKGMSTRKRQGEFCKPC</sequence>
<protein>
    <recommendedName>
        <fullName evidence="1">tRNA (cytosine(34)-C(5))-methyltransferase, mitochondrial</fullName>
        <ecNumber evidence="1">2.1.1.-</ecNumber>
    </recommendedName>
    <alternativeName>
        <fullName evidence="4">NOL1/NOP2/Sun domain family member 3</fullName>
    </alternativeName>
</protein>
<name>NSUN3_MOUSE</name>
<reference key="1">
    <citation type="journal article" date="2005" name="Science">
        <title>The transcriptional landscape of the mammalian genome.</title>
        <authorList>
            <person name="Carninci P."/>
            <person name="Kasukawa T."/>
            <person name="Katayama S."/>
            <person name="Gough J."/>
            <person name="Frith M.C."/>
            <person name="Maeda N."/>
            <person name="Oyama R."/>
            <person name="Ravasi T."/>
            <person name="Lenhard B."/>
            <person name="Wells C."/>
            <person name="Kodzius R."/>
            <person name="Shimokawa K."/>
            <person name="Bajic V.B."/>
            <person name="Brenner S.E."/>
            <person name="Batalov S."/>
            <person name="Forrest A.R."/>
            <person name="Zavolan M."/>
            <person name="Davis M.J."/>
            <person name="Wilming L.G."/>
            <person name="Aidinis V."/>
            <person name="Allen J.E."/>
            <person name="Ambesi-Impiombato A."/>
            <person name="Apweiler R."/>
            <person name="Aturaliya R.N."/>
            <person name="Bailey T.L."/>
            <person name="Bansal M."/>
            <person name="Baxter L."/>
            <person name="Beisel K.W."/>
            <person name="Bersano T."/>
            <person name="Bono H."/>
            <person name="Chalk A.M."/>
            <person name="Chiu K.P."/>
            <person name="Choudhary V."/>
            <person name="Christoffels A."/>
            <person name="Clutterbuck D.R."/>
            <person name="Crowe M.L."/>
            <person name="Dalla E."/>
            <person name="Dalrymple B.P."/>
            <person name="de Bono B."/>
            <person name="Della Gatta G."/>
            <person name="di Bernardo D."/>
            <person name="Down T."/>
            <person name="Engstrom P."/>
            <person name="Fagiolini M."/>
            <person name="Faulkner G."/>
            <person name="Fletcher C.F."/>
            <person name="Fukushima T."/>
            <person name="Furuno M."/>
            <person name="Futaki S."/>
            <person name="Gariboldi M."/>
            <person name="Georgii-Hemming P."/>
            <person name="Gingeras T.R."/>
            <person name="Gojobori T."/>
            <person name="Green R.E."/>
            <person name="Gustincich S."/>
            <person name="Harbers M."/>
            <person name="Hayashi Y."/>
            <person name="Hensch T.K."/>
            <person name="Hirokawa N."/>
            <person name="Hill D."/>
            <person name="Huminiecki L."/>
            <person name="Iacono M."/>
            <person name="Ikeo K."/>
            <person name="Iwama A."/>
            <person name="Ishikawa T."/>
            <person name="Jakt M."/>
            <person name="Kanapin A."/>
            <person name="Katoh M."/>
            <person name="Kawasawa Y."/>
            <person name="Kelso J."/>
            <person name="Kitamura H."/>
            <person name="Kitano H."/>
            <person name="Kollias G."/>
            <person name="Krishnan S.P."/>
            <person name="Kruger A."/>
            <person name="Kummerfeld S.K."/>
            <person name="Kurochkin I.V."/>
            <person name="Lareau L.F."/>
            <person name="Lazarevic D."/>
            <person name="Lipovich L."/>
            <person name="Liu J."/>
            <person name="Liuni S."/>
            <person name="McWilliam S."/>
            <person name="Madan Babu M."/>
            <person name="Madera M."/>
            <person name="Marchionni L."/>
            <person name="Matsuda H."/>
            <person name="Matsuzawa S."/>
            <person name="Miki H."/>
            <person name="Mignone F."/>
            <person name="Miyake S."/>
            <person name="Morris K."/>
            <person name="Mottagui-Tabar S."/>
            <person name="Mulder N."/>
            <person name="Nakano N."/>
            <person name="Nakauchi H."/>
            <person name="Ng P."/>
            <person name="Nilsson R."/>
            <person name="Nishiguchi S."/>
            <person name="Nishikawa S."/>
            <person name="Nori F."/>
            <person name="Ohara O."/>
            <person name="Okazaki Y."/>
            <person name="Orlando V."/>
            <person name="Pang K.C."/>
            <person name="Pavan W.J."/>
            <person name="Pavesi G."/>
            <person name="Pesole G."/>
            <person name="Petrovsky N."/>
            <person name="Piazza S."/>
            <person name="Reed J."/>
            <person name="Reid J.F."/>
            <person name="Ring B.Z."/>
            <person name="Ringwald M."/>
            <person name="Rost B."/>
            <person name="Ruan Y."/>
            <person name="Salzberg S.L."/>
            <person name="Sandelin A."/>
            <person name="Schneider C."/>
            <person name="Schoenbach C."/>
            <person name="Sekiguchi K."/>
            <person name="Semple C.A."/>
            <person name="Seno S."/>
            <person name="Sessa L."/>
            <person name="Sheng Y."/>
            <person name="Shibata Y."/>
            <person name="Shimada H."/>
            <person name="Shimada K."/>
            <person name="Silva D."/>
            <person name="Sinclair B."/>
            <person name="Sperling S."/>
            <person name="Stupka E."/>
            <person name="Sugiura K."/>
            <person name="Sultana R."/>
            <person name="Takenaka Y."/>
            <person name="Taki K."/>
            <person name="Tammoja K."/>
            <person name="Tan S.L."/>
            <person name="Tang S."/>
            <person name="Taylor M.S."/>
            <person name="Tegner J."/>
            <person name="Teichmann S.A."/>
            <person name="Ueda H.R."/>
            <person name="van Nimwegen E."/>
            <person name="Verardo R."/>
            <person name="Wei C.L."/>
            <person name="Yagi K."/>
            <person name="Yamanishi H."/>
            <person name="Zabarovsky E."/>
            <person name="Zhu S."/>
            <person name="Zimmer A."/>
            <person name="Hide W."/>
            <person name="Bult C."/>
            <person name="Grimmond S.M."/>
            <person name="Teasdale R.D."/>
            <person name="Liu E.T."/>
            <person name="Brusic V."/>
            <person name="Quackenbush J."/>
            <person name="Wahlestedt C."/>
            <person name="Mattick J.S."/>
            <person name="Hume D.A."/>
            <person name="Kai C."/>
            <person name="Sasaki D."/>
            <person name="Tomaru Y."/>
            <person name="Fukuda S."/>
            <person name="Kanamori-Katayama M."/>
            <person name="Suzuki M."/>
            <person name="Aoki J."/>
            <person name="Arakawa T."/>
            <person name="Iida J."/>
            <person name="Imamura K."/>
            <person name="Itoh M."/>
            <person name="Kato T."/>
            <person name="Kawaji H."/>
            <person name="Kawagashira N."/>
            <person name="Kawashima T."/>
            <person name="Kojima M."/>
            <person name="Kondo S."/>
            <person name="Konno H."/>
            <person name="Nakano K."/>
            <person name="Ninomiya N."/>
            <person name="Nishio T."/>
            <person name="Okada M."/>
            <person name="Plessy C."/>
            <person name="Shibata K."/>
            <person name="Shiraki T."/>
            <person name="Suzuki S."/>
            <person name="Tagami M."/>
            <person name="Waki K."/>
            <person name="Watahiki A."/>
            <person name="Okamura-Oho Y."/>
            <person name="Suzuki H."/>
            <person name="Kawai J."/>
            <person name="Hayashizaki Y."/>
        </authorList>
    </citation>
    <scope>NUCLEOTIDE SEQUENCE [LARGE SCALE MRNA] (ISOFORMS 1 AND 2)</scope>
    <source>
        <strain>C57BL/6J</strain>
        <strain>NOD</strain>
        <tissue>Medulla oblongata</tissue>
        <tissue>Thymus</tissue>
    </source>
</reference>
<reference key="2">
    <citation type="journal article" date="2004" name="Genome Res.">
        <title>The status, quality, and expansion of the NIH full-length cDNA project: the Mammalian Gene Collection (MGC).</title>
        <authorList>
            <consortium name="The MGC Project Team"/>
        </authorList>
    </citation>
    <scope>NUCLEOTIDE SEQUENCE [LARGE SCALE MRNA] (ISOFORM 1)</scope>
    <source>
        <tissue>Brain</tissue>
    </source>
</reference>
<evidence type="ECO:0000250" key="1">
    <source>
        <dbReference type="UniProtKB" id="Q9H649"/>
    </source>
</evidence>
<evidence type="ECO:0000255" key="2">
    <source>
        <dbReference type="PROSITE-ProRule" id="PRU01023"/>
    </source>
</evidence>
<evidence type="ECO:0000303" key="3">
    <source>
    </source>
</evidence>
<evidence type="ECO:0000312" key="4">
    <source>
        <dbReference type="MGI" id="MGI:2146565"/>
    </source>
</evidence>
<keyword id="KW-0025">Alternative splicing</keyword>
<keyword id="KW-0489">Methyltransferase</keyword>
<keyword id="KW-0496">Mitochondrion</keyword>
<keyword id="KW-1185">Reference proteome</keyword>
<keyword id="KW-0694">RNA-binding</keyword>
<keyword id="KW-0949">S-adenosyl-L-methionine</keyword>
<keyword id="KW-0808">Transferase</keyword>
<keyword id="KW-0820">tRNA-binding</keyword>